<proteinExistence type="evidence at protein level"/>
<reference evidence="11" key="1">
    <citation type="journal article" date="2014" name="PLoS Genet.">
        <title>Analysis of the genome and transcriptome of Cryptococcus neoformans var. grubii reveals complex RNA expression and microevolution leading to virulence attenuation.</title>
        <authorList>
            <person name="Janbon G."/>
            <person name="Ormerod K.L."/>
            <person name="Paulet D."/>
            <person name="Byrnes E.J. III"/>
            <person name="Yadav V."/>
            <person name="Chatterjee G."/>
            <person name="Mullapudi N."/>
            <person name="Hon C.-C."/>
            <person name="Billmyre R.B."/>
            <person name="Brunel F."/>
            <person name="Bahn Y.-S."/>
            <person name="Chen W."/>
            <person name="Chen Y."/>
            <person name="Chow E.W.L."/>
            <person name="Coppee J.-Y."/>
            <person name="Floyd-Averette A."/>
            <person name="Gaillardin C."/>
            <person name="Gerik K.J."/>
            <person name="Goldberg J."/>
            <person name="Gonzalez-Hilarion S."/>
            <person name="Gujja S."/>
            <person name="Hamlin J.L."/>
            <person name="Hsueh Y.-P."/>
            <person name="Ianiri G."/>
            <person name="Jones S."/>
            <person name="Kodira C.D."/>
            <person name="Kozubowski L."/>
            <person name="Lam W."/>
            <person name="Marra M."/>
            <person name="Mesner L.D."/>
            <person name="Mieczkowski P.A."/>
            <person name="Moyrand F."/>
            <person name="Nielsen K."/>
            <person name="Proux C."/>
            <person name="Rossignol T."/>
            <person name="Schein J.E."/>
            <person name="Sun S."/>
            <person name="Wollschlaeger C."/>
            <person name="Wood I.A."/>
            <person name="Zeng Q."/>
            <person name="Neuveglise C."/>
            <person name="Newlon C.S."/>
            <person name="Perfect J.R."/>
            <person name="Lodge J.K."/>
            <person name="Idnurm A."/>
            <person name="Stajich J.E."/>
            <person name="Kronstad J.W."/>
            <person name="Sanyal K."/>
            <person name="Heitman J."/>
            <person name="Fraser J.A."/>
            <person name="Cuomo C.A."/>
            <person name="Dietrich F.S."/>
        </authorList>
    </citation>
    <scope>NUCLEOTIDE SEQUENCE [LARGE SCALE GENOMIC DNA]</scope>
    <source>
        <strain>H99 / ATCC 208821 / CBS 10515 / FGSC 9487</strain>
    </source>
</reference>
<reference evidence="8" key="2">
    <citation type="journal article" date="2017" name="Genetics">
        <title>Rewiring of Signaling Networks Modulating Thermotolerance in the Human Pathogen Cryptococcus neoformans.</title>
        <authorList>
            <person name="Yang D.H."/>
            <person name="Jung K.W."/>
            <person name="Bang S."/>
            <person name="Lee J.W."/>
            <person name="Song M.H."/>
            <person name="Floyd-Averette A."/>
            <person name="Festa R.A."/>
            <person name="Ianiri G."/>
            <person name="Idnurm A."/>
            <person name="Thiele D.J."/>
            <person name="Heitman J."/>
            <person name="Bahn Y.S."/>
        </authorList>
    </citation>
    <scope>FUNCTION</scope>
    <scope>SUBCELLULAR LOCATION</scope>
    <scope>INDUCTION</scope>
    <scope>PHOSPHORYLATION</scope>
    <scope>DISRUPTION PHENOTYPE</scope>
</reference>
<sequence>MTTNLYAIAGPSKPTTPTSTPSPRSEPPSPLKSLTSLPTNPLNPQGTSTSNALTNQSSSTGIGISKPGLSVDENGEVMKVPAFLNKLYTMVSDPEVDDLIYWGENGDSFFVPNAELFGRELLPRWFKHSNFSSFVRQLNMYGFHKVPHLQSGALKNETPIELWEFANPYFKRGQPQLLTKVTRKNNRLSNSGVGSSSSLGGSGAGGGMNTRSASAAAASGSGSGQIQQAISQGHEAGNHSTSGKYLITDGTTPGSAPPSHTSAGPLIAPQTLDLSAINSGIAAIRQTQASIATDLRKLQASNEALWRQAYETQEKQRKHEETIDLIVSFLERLFGTEGEGLKGLKEAMRRGVGVRRDRDGREGRDSRDARFADDDDGGQKKRRRVGLDRMIEGGSGDGTGEHGEIESPSSDDRLVEIGSNSEYSIPSVKRTSSSSHPLSLGQLGSSRFTALPSEDPSPSGSGLGSTPYEGLRTTQASAHGAGADVNVTDPTLGMNHLSPLSDTDPLLPSSSNALAPYTSHPSFPSSNPNPSSAWAFNPSQPLLSPTSAVAAAHAYNLDPSLLQTTIGSLLQSPAVAQMFLKSLSASAQGQALTSHSHPHNPSLLNPNPNGNASTSASASAHDMNTEGLGTGSGTKDLDPTLALFSPLPSHSSLASQSNDLLKSYNDALTVGEGVDNLQESIDSLVRSMGLDLPNGGSSSVGVDVGDGSGVGTGTGEGDGEFNVDEFLQGLAKEGEGEEGEREVGGDGDASSSGAGAENGRKEDVIAQSGLK</sequence>
<feature type="chain" id="PRO_0000452015" description="Heat shock transcription factor">
    <location>
        <begin position="1"/>
        <end position="771"/>
    </location>
</feature>
<feature type="DNA-binding region" evidence="1">
    <location>
        <begin position="78"/>
        <end position="168"/>
    </location>
</feature>
<feature type="region of interest" description="Disordered" evidence="5">
    <location>
        <begin position="1"/>
        <end position="70"/>
    </location>
</feature>
<feature type="region of interest" description="Disordered" evidence="5">
    <location>
        <begin position="183"/>
        <end position="266"/>
    </location>
</feature>
<feature type="region of interest" description="Involved in trimerization" evidence="2">
    <location>
        <begin position="280"/>
        <end position="333"/>
    </location>
</feature>
<feature type="region of interest" description="Disordered" evidence="5">
    <location>
        <begin position="350"/>
        <end position="513"/>
    </location>
</feature>
<feature type="region of interest" description="Disordered" evidence="5">
    <location>
        <begin position="590"/>
        <end position="634"/>
    </location>
</feature>
<feature type="region of interest" description="Disordered" evidence="5">
    <location>
        <begin position="708"/>
        <end position="771"/>
    </location>
</feature>
<feature type="compositionally biased region" description="Low complexity" evidence="5">
    <location>
        <begin position="11"/>
        <end position="23"/>
    </location>
</feature>
<feature type="compositionally biased region" description="Low complexity" evidence="5">
    <location>
        <begin position="31"/>
        <end position="42"/>
    </location>
</feature>
<feature type="compositionally biased region" description="Polar residues" evidence="5">
    <location>
        <begin position="43"/>
        <end position="62"/>
    </location>
</feature>
<feature type="compositionally biased region" description="Low complexity" evidence="5">
    <location>
        <begin position="189"/>
        <end position="199"/>
    </location>
</feature>
<feature type="compositionally biased region" description="Low complexity" evidence="5">
    <location>
        <begin position="212"/>
        <end position="233"/>
    </location>
</feature>
<feature type="compositionally biased region" description="Polar residues" evidence="5">
    <location>
        <begin position="238"/>
        <end position="262"/>
    </location>
</feature>
<feature type="compositionally biased region" description="Basic and acidic residues" evidence="5">
    <location>
        <begin position="350"/>
        <end position="372"/>
    </location>
</feature>
<feature type="compositionally biased region" description="Basic and acidic residues" evidence="5">
    <location>
        <begin position="399"/>
        <end position="415"/>
    </location>
</feature>
<feature type="compositionally biased region" description="Polar residues" evidence="5">
    <location>
        <begin position="418"/>
        <end position="448"/>
    </location>
</feature>
<feature type="compositionally biased region" description="Low complexity" evidence="5">
    <location>
        <begin position="497"/>
        <end position="511"/>
    </location>
</feature>
<feature type="compositionally biased region" description="Low complexity" evidence="5">
    <location>
        <begin position="599"/>
        <end position="620"/>
    </location>
</feature>
<evidence type="ECO:0000250" key="1">
    <source>
        <dbReference type="UniProtKB" id="P10961"/>
    </source>
</evidence>
<evidence type="ECO:0000250" key="2">
    <source>
        <dbReference type="UniProtKB" id="P22121"/>
    </source>
</evidence>
<evidence type="ECO:0000250" key="3">
    <source>
        <dbReference type="UniProtKB" id="Q5KMX8"/>
    </source>
</evidence>
<evidence type="ECO:0000255" key="4">
    <source>
        <dbReference type="RuleBase" id="RU004020"/>
    </source>
</evidence>
<evidence type="ECO:0000256" key="5">
    <source>
        <dbReference type="SAM" id="MobiDB-lite"/>
    </source>
</evidence>
<evidence type="ECO:0000269" key="6">
    <source>
    </source>
</evidence>
<evidence type="ECO:0000303" key="7">
    <source>
    </source>
</evidence>
<evidence type="ECO:0000305" key="8"/>
<evidence type="ECO:0000305" key="9">
    <source>
    </source>
</evidence>
<evidence type="ECO:0000312" key="10">
    <source>
        <dbReference type="EMBL" id="AFR93011.1"/>
    </source>
</evidence>
<evidence type="ECO:0000312" key="11">
    <source>
        <dbReference type="Proteomes" id="UP000010091"/>
    </source>
</evidence>
<accession>J9VHZ9</accession>
<protein>
    <recommendedName>
        <fullName evidence="7">Heat shock transcription factor</fullName>
        <shortName evidence="8">HSTF</shortName>
    </recommendedName>
    <alternativeName>
        <fullName evidence="8">Heat shock factor protein</fullName>
        <shortName evidence="8">HSF</shortName>
    </alternativeName>
</protein>
<comment type="function">
    <text evidence="6">DNA-binding transcription factor that specifically binds heat shock promoter elements (HSE) and activates transcription (PubMed:27866167). Promotes thermotolerance by transiently regulating a subset of genes (PubMed:27866167). Induces expression of STI, SSA1, SSA2, HSP78 and KAR2 during the heat response (PubMed:27866167).</text>
</comment>
<comment type="subunit">
    <text evidence="1 3">Homotrimer (By similarity). Homotrimerization increases the affinity of HSF1 to DNA (By similarity). Interacts with transcriptional coregulator SSA1 on chromatin (By similarity).</text>
</comment>
<comment type="subcellular location">
    <subcellularLocation>
        <location evidence="9">Nucleus</location>
    </subcellularLocation>
</comment>
<comment type="induction">
    <text evidence="6">Repressed by high temperature (at protein level) (PubMed:27866167). Induced by oxidative stress (PubMed:27866167).</text>
</comment>
<comment type="PTM">
    <text evidence="6">Phosphorylated at high temperature.</text>
</comment>
<comment type="disruption phenotype">
    <text evidence="6">Inviable vegetative cell population (PubMed:27866167). Inviable spore (PubMed:27866167).</text>
</comment>
<comment type="similarity">
    <text evidence="4">Belongs to the HSF family.</text>
</comment>
<dbReference type="EMBL" id="CP003821">
    <property type="protein sequence ID" value="AFR93011.1"/>
    <property type="molecule type" value="Genomic_DNA"/>
</dbReference>
<dbReference type="RefSeq" id="XP_012047741.1">
    <property type="nucleotide sequence ID" value="XM_012192351.1"/>
</dbReference>
<dbReference type="SMR" id="J9VHZ9"/>
<dbReference type="GeneID" id="23890305"/>
<dbReference type="KEGG" id="cng:CNAG_07460"/>
<dbReference type="VEuPathDB" id="FungiDB:CNAG_07460"/>
<dbReference type="HOGENOM" id="CLU_015858_1_0_1"/>
<dbReference type="OrthoDB" id="8709at5206"/>
<dbReference type="Proteomes" id="UP000010091">
    <property type="component" value="Chromosome 2"/>
</dbReference>
<dbReference type="GO" id="GO:0000785">
    <property type="term" value="C:chromatin"/>
    <property type="evidence" value="ECO:0000314"/>
    <property type="project" value="UniProtKB"/>
</dbReference>
<dbReference type="GO" id="GO:0005634">
    <property type="term" value="C:nucleus"/>
    <property type="evidence" value="ECO:0000305"/>
    <property type="project" value="UniProtKB"/>
</dbReference>
<dbReference type="GO" id="GO:0003700">
    <property type="term" value="F:DNA-binding transcription factor activity"/>
    <property type="evidence" value="ECO:0000315"/>
    <property type="project" value="UniProtKB"/>
</dbReference>
<dbReference type="GO" id="GO:0043565">
    <property type="term" value="F:sequence-specific DNA binding"/>
    <property type="evidence" value="ECO:0000250"/>
    <property type="project" value="UniProtKB"/>
</dbReference>
<dbReference type="GO" id="GO:0070370">
    <property type="term" value="P:cellular heat acclimation"/>
    <property type="evidence" value="ECO:0000315"/>
    <property type="project" value="UniProtKB"/>
</dbReference>
<dbReference type="FunFam" id="1.10.10.10:FF:000027">
    <property type="entry name" value="Heat shock transcription factor 1"/>
    <property type="match status" value="1"/>
</dbReference>
<dbReference type="Gene3D" id="1.10.10.10">
    <property type="entry name" value="Winged helix-like DNA-binding domain superfamily/Winged helix DNA-binding domain"/>
    <property type="match status" value="1"/>
</dbReference>
<dbReference type="InterPro" id="IPR000232">
    <property type="entry name" value="HSF_DNA-bd"/>
</dbReference>
<dbReference type="InterPro" id="IPR036388">
    <property type="entry name" value="WH-like_DNA-bd_sf"/>
</dbReference>
<dbReference type="InterPro" id="IPR036390">
    <property type="entry name" value="WH_DNA-bd_sf"/>
</dbReference>
<dbReference type="PANTHER" id="PTHR10015:SF427">
    <property type="entry name" value="HEAT SHOCK FACTOR PROTEIN"/>
    <property type="match status" value="1"/>
</dbReference>
<dbReference type="PANTHER" id="PTHR10015">
    <property type="entry name" value="HEAT SHOCK TRANSCRIPTION FACTOR"/>
    <property type="match status" value="1"/>
</dbReference>
<dbReference type="Pfam" id="PF00447">
    <property type="entry name" value="HSF_DNA-bind"/>
    <property type="match status" value="1"/>
</dbReference>
<dbReference type="PRINTS" id="PR00056">
    <property type="entry name" value="HSFDOMAIN"/>
</dbReference>
<dbReference type="SMART" id="SM00415">
    <property type="entry name" value="HSF"/>
    <property type="match status" value="1"/>
</dbReference>
<dbReference type="SUPFAM" id="SSF46785">
    <property type="entry name" value="Winged helix' DNA-binding domain"/>
    <property type="match status" value="1"/>
</dbReference>
<dbReference type="PROSITE" id="PS00434">
    <property type="entry name" value="HSF_DOMAIN"/>
    <property type="match status" value="1"/>
</dbReference>
<gene>
    <name evidence="7" type="primary">HSF1</name>
    <name evidence="10" type="ORF">CNAG_07460</name>
</gene>
<organism evidence="11">
    <name type="scientific">Cryptococcus neoformans var. grubii serotype A (strain H99 / ATCC 208821 / CBS 10515 / FGSC 9487)</name>
    <name type="common">Filobasidiella neoformans var. grubii</name>
    <dbReference type="NCBI Taxonomy" id="235443"/>
    <lineage>
        <taxon>Eukaryota</taxon>
        <taxon>Fungi</taxon>
        <taxon>Dikarya</taxon>
        <taxon>Basidiomycota</taxon>
        <taxon>Agaricomycotina</taxon>
        <taxon>Tremellomycetes</taxon>
        <taxon>Tremellales</taxon>
        <taxon>Cryptococcaceae</taxon>
        <taxon>Cryptococcus</taxon>
        <taxon>Cryptococcus neoformans species complex</taxon>
    </lineage>
</organism>
<name>HSF_CRYNH</name>
<keyword id="KW-0010">Activator</keyword>
<keyword id="KW-0238">DNA-binding</keyword>
<keyword id="KW-0539">Nucleus</keyword>
<keyword id="KW-0597">Phosphoprotein</keyword>
<keyword id="KW-0346">Stress response</keyword>
<keyword id="KW-0804">Transcription</keyword>
<keyword id="KW-0805">Transcription regulation</keyword>